<sequence length="157" mass="17726">MLNIVLYEPEIPPNTGNIIRLCANTGFRLHIIEPMGFAWDDKRLRRAGLDYHEFTAVTRHHDYRAFLEAENPQRLFALTTKGTPAHSAVSYQDGDYLMFGPETRGLPASILDALPAEQKIRIPMVPDSRSMNLSNAVSVVVYEAWRQLGYPGAVLRD</sequence>
<dbReference type="EC" id="2.1.1.207" evidence="1"/>
<dbReference type="EMBL" id="AE014075">
    <property type="protein sequence ID" value="AAN82864.1"/>
    <property type="molecule type" value="Genomic_DNA"/>
</dbReference>
<dbReference type="RefSeq" id="WP_000932347.1">
    <property type="nucleotide sequence ID" value="NZ_CP051263.1"/>
</dbReference>
<dbReference type="SMR" id="P0AGJ8"/>
<dbReference type="STRING" id="199310.c4428"/>
<dbReference type="KEGG" id="ecc:c4428"/>
<dbReference type="eggNOG" id="COG0219">
    <property type="taxonomic scope" value="Bacteria"/>
</dbReference>
<dbReference type="HOGENOM" id="CLU_110125_1_0_6"/>
<dbReference type="BioCyc" id="ECOL199310:C4428-MONOMER"/>
<dbReference type="Proteomes" id="UP000001410">
    <property type="component" value="Chromosome"/>
</dbReference>
<dbReference type="GO" id="GO:0005737">
    <property type="term" value="C:cytoplasm"/>
    <property type="evidence" value="ECO:0007669"/>
    <property type="project" value="UniProtKB-SubCell"/>
</dbReference>
<dbReference type="GO" id="GO:0003723">
    <property type="term" value="F:RNA binding"/>
    <property type="evidence" value="ECO:0007669"/>
    <property type="project" value="InterPro"/>
</dbReference>
<dbReference type="GO" id="GO:0141102">
    <property type="term" value="F:tRNA (5-carboxymethylaminomethyluridine(34)-2'-O)-methyltransferase activity"/>
    <property type="evidence" value="ECO:0007669"/>
    <property type="project" value="RHEA"/>
</dbReference>
<dbReference type="GO" id="GO:0141098">
    <property type="term" value="F:tRNA (cytidine(34)-2'-O)-methyltransferase activity"/>
    <property type="evidence" value="ECO:0007669"/>
    <property type="project" value="RHEA"/>
</dbReference>
<dbReference type="GO" id="GO:0002131">
    <property type="term" value="P:wobble position cytosine ribose methylation"/>
    <property type="evidence" value="ECO:0007669"/>
    <property type="project" value="TreeGrafter"/>
</dbReference>
<dbReference type="GO" id="GO:0002132">
    <property type="term" value="P:wobble position uridine ribose methylation"/>
    <property type="evidence" value="ECO:0007669"/>
    <property type="project" value="TreeGrafter"/>
</dbReference>
<dbReference type="CDD" id="cd18094">
    <property type="entry name" value="SpoU-like_TrmL"/>
    <property type="match status" value="1"/>
</dbReference>
<dbReference type="FunFam" id="3.40.1280.10:FF:000002">
    <property type="entry name" value="Peptidylprolyl isomerase"/>
    <property type="match status" value="1"/>
</dbReference>
<dbReference type="Gene3D" id="3.40.1280.10">
    <property type="match status" value="1"/>
</dbReference>
<dbReference type="HAMAP" id="MF_01885">
    <property type="entry name" value="tRNA_methyltr_TrmL"/>
    <property type="match status" value="1"/>
</dbReference>
<dbReference type="InterPro" id="IPR029028">
    <property type="entry name" value="Alpha/beta_knot_MTases"/>
</dbReference>
<dbReference type="InterPro" id="IPR001537">
    <property type="entry name" value="SpoU_MeTrfase"/>
</dbReference>
<dbReference type="InterPro" id="IPR016914">
    <property type="entry name" value="TrmL"/>
</dbReference>
<dbReference type="InterPro" id="IPR029026">
    <property type="entry name" value="tRNA_m1G_MTases_N"/>
</dbReference>
<dbReference type="NCBIfam" id="NF007683">
    <property type="entry name" value="PRK10358.1"/>
    <property type="match status" value="1"/>
</dbReference>
<dbReference type="NCBIfam" id="TIGR00185">
    <property type="entry name" value="tRNA_yibK_trmL"/>
    <property type="match status" value="1"/>
</dbReference>
<dbReference type="PANTHER" id="PTHR42971">
    <property type="entry name" value="TRNA (CYTIDINE(34)-2'-O)-METHYLTRANSFERASE"/>
    <property type="match status" value="1"/>
</dbReference>
<dbReference type="PANTHER" id="PTHR42971:SF1">
    <property type="entry name" value="TRNA (CYTIDINE(34)-2'-O)-METHYLTRANSFERASE"/>
    <property type="match status" value="1"/>
</dbReference>
<dbReference type="Pfam" id="PF00588">
    <property type="entry name" value="SpoU_methylase"/>
    <property type="match status" value="1"/>
</dbReference>
<dbReference type="PIRSF" id="PIRSF029256">
    <property type="entry name" value="SpoU_TrmH_prd"/>
    <property type="match status" value="1"/>
</dbReference>
<dbReference type="SUPFAM" id="SSF75217">
    <property type="entry name" value="alpha/beta knot"/>
    <property type="match status" value="1"/>
</dbReference>
<evidence type="ECO:0000255" key="1">
    <source>
        <dbReference type="HAMAP-Rule" id="MF_01885"/>
    </source>
</evidence>
<evidence type="ECO:0000305" key="2"/>
<gene>
    <name evidence="1" type="primary">trmL</name>
    <name type="synonym">yibK</name>
    <name type="ordered locus">c4428</name>
</gene>
<proteinExistence type="inferred from homology"/>
<organism>
    <name type="scientific">Escherichia coli O6:H1 (strain CFT073 / ATCC 700928 / UPEC)</name>
    <dbReference type="NCBI Taxonomy" id="199310"/>
    <lineage>
        <taxon>Bacteria</taxon>
        <taxon>Pseudomonadati</taxon>
        <taxon>Pseudomonadota</taxon>
        <taxon>Gammaproteobacteria</taxon>
        <taxon>Enterobacterales</taxon>
        <taxon>Enterobacteriaceae</taxon>
        <taxon>Escherichia</taxon>
    </lineage>
</organism>
<reference key="1">
    <citation type="journal article" date="2002" name="Proc. Natl. Acad. Sci. U.S.A.">
        <title>Extensive mosaic structure revealed by the complete genome sequence of uropathogenic Escherichia coli.</title>
        <authorList>
            <person name="Welch R.A."/>
            <person name="Burland V."/>
            <person name="Plunkett G. III"/>
            <person name="Redford P."/>
            <person name="Roesch P."/>
            <person name="Rasko D."/>
            <person name="Buckles E.L."/>
            <person name="Liou S.-R."/>
            <person name="Boutin A."/>
            <person name="Hackett J."/>
            <person name="Stroud D."/>
            <person name="Mayhew G.F."/>
            <person name="Rose D.J."/>
            <person name="Zhou S."/>
            <person name="Schwartz D.C."/>
            <person name="Perna N.T."/>
            <person name="Mobley H.L.T."/>
            <person name="Donnenberg M.S."/>
            <person name="Blattner F.R."/>
        </authorList>
    </citation>
    <scope>NUCLEOTIDE SEQUENCE [LARGE SCALE GENOMIC DNA]</scope>
    <source>
        <strain>CFT073 / ATCC 700928 / UPEC</strain>
    </source>
</reference>
<name>TRML_ECOL6</name>
<feature type="chain" id="PRO_0000159818" description="tRNA (cytidine(34)-2'-O)-methyltransferase">
    <location>
        <begin position="1"/>
        <end position="157"/>
    </location>
</feature>
<feature type="binding site" evidence="1">
    <location>
        <position position="78"/>
    </location>
    <ligand>
        <name>S-adenosyl-L-methionine</name>
        <dbReference type="ChEBI" id="CHEBI:59789"/>
    </ligand>
</feature>
<feature type="binding site" evidence="1">
    <location>
        <position position="100"/>
    </location>
    <ligand>
        <name>S-adenosyl-L-methionine</name>
        <dbReference type="ChEBI" id="CHEBI:59789"/>
    </ligand>
</feature>
<feature type="binding site" evidence="1">
    <location>
        <position position="122"/>
    </location>
    <ligand>
        <name>S-adenosyl-L-methionine</name>
        <dbReference type="ChEBI" id="CHEBI:59789"/>
    </ligand>
</feature>
<feature type="binding site" evidence="1">
    <location>
        <position position="130"/>
    </location>
    <ligand>
        <name>S-adenosyl-L-methionine</name>
        <dbReference type="ChEBI" id="CHEBI:59789"/>
    </ligand>
</feature>
<keyword id="KW-0963">Cytoplasm</keyword>
<keyword id="KW-0489">Methyltransferase</keyword>
<keyword id="KW-1185">Reference proteome</keyword>
<keyword id="KW-0949">S-adenosyl-L-methionine</keyword>
<keyword id="KW-0808">Transferase</keyword>
<keyword id="KW-0819">tRNA processing</keyword>
<protein>
    <recommendedName>
        <fullName evidence="1">tRNA (cytidine(34)-2'-O)-methyltransferase</fullName>
        <ecNumber evidence="1">2.1.1.207</ecNumber>
    </recommendedName>
    <alternativeName>
        <fullName evidence="1">tRNA (cytidine/uridine-2'-O-)-methyltransferase TrmL</fullName>
    </alternativeName>
</protein>
<accession>P0AGJ8</accession>
<accession>P33899</accession>
<comment type="function">
    <text evidence="1">Methylates the ribose at the nucleotide 34 wobble position in the two leucyl isoacceptors tRNA(Leu)(CmAA) and tRNA(Leu)(cmnm5UmAA). Catalyzes the methyl transfer from S-adenosyl-L-methionine to the 2'-OH of the wobble nucleotide.</text>
</comment>
<comment type="catalytic activity">
    <reaction evidence="1">
        <text>cytidine(34) in tRNA + S-adenosyl-L-methionine = 2'-O-methylcytidine(34) in tRNA + S-adenosyl-L-homocysteine + H(+)</text>
        <dbReference type="Rhea" id="RHEA:43084"/>
        <dbReference type="Rhea" id="RHEA-COMP:10331"/>
        <dbReference type="Rhea" id="RHEA-COMP:10332"/>
        <dbReference type="ChEBI" id="CHEBI:15378"/>
        <dbReference type="ChEBI" id="CHEBI:57856"/>
        <dbReference type="ChEBI" id="CHEBI:59789"/>
        <dbReference type="ChEBI" id="CHEBI:74495"/>
        <dbReference type="ChEBI" id="CHEBI:82748"/>
        <dbReference type="EC" id="2.1.1.207"/>
    </reaction>
</comment>
<comment type="catalytic activity">
    <reaction evidence="1">
        <text>5-carboxymethylaminomethyluridine(34) in tRNA(Leu) + S-adenosyl-L-methionine = 5-carboxymethylaminomethyl-2'-O-methyluridine(34) in tRNA(Leu) + S-adenosyl-L-homocysteine + H(+)</text>
        <dbReference type="Rhea" id="RHEA:43088"/>
        <dbReference type="Rhea" id="RHEA-COMP:10333"/>
        <dbReference type="Rhea" id="RHEA-COMP:10334"/>
        <dbReference type="ChEBI" id="CHEBI:15378"/>
        <dbReference type="ChEBI" id="CHEBI:57856"/>
        <dbReference type="ChEBI" id="CHEBI:59789"/>
        <dbReference type="ChEBI" id="CHEBI:74508"/>
        <dbReference type="ChEBI" id="CHEBI:74511"/>
        <dbReference type="EC" id="2.1.1.207"/>
    </reaction>
</comment>
<comment type="subunit">
    <text evidence="1">Homodimer.</text>
</comment>
<comment type="subcellular location">
    <subcellularLocation>
        <location evidence="1">Cytoplasm</location>
    </subcellularLocation>
</comment>
<comment type="similarity">
    <text evidence="1">Belongs to the class IV-like SAM-binding methyltransferase superfamily. RNA methyltransferase TrmH family. TrmL subfamily.</text>
</comment>
<comment type="caution">
    <text evidence="2">Possibly identical to gltE.</text>
</comment>